<reference evidence="13" key="1">
    <citation type="journal article" date="1998" name="Infect. Immun.">
        <title>DNA sequencing and analysis of the low-Ca2+-response plasmid pCD1 of Yersinia pestis KIM5.</title>
        <authorList>
            <person name="Perry R.D."/>
            <person name="Straley S.C."/>
            <person name="Fetherston J.D."/>
            <person name="Rose D.J."/>
            <person name="Gregor J."/>
            <person name="Blattner F.R."/>
        </authorList>
    </citation>
    <scope>NUCLEOTIDE SEQUENCE [GENOMIC DNA]</scope>
    <source>
        <strain>KIM5 / Biovar Mediaevalis</strain>
    </source>
</reference>
<reference evidence="12" key="2">
    <citation type="journal article" date="1998" name="J. Bacteriol.">
        <title>Structural organization of virulence-associated plasmids of Yersinia pestis.</title>
        <authorList>
            <person name="Hu P."/>
            <person name="Elliott J."/>
            <person name="McCready P."/>
            <person name="Skowronski E."/>
            <person name="Garnes J."/>
            <person name="Kobayashi A."/>
            <person name="Brubaker R.R."/>
            <person name="Garcia E."/>
        </authorList>
    </citation>
    <scope>NUCLEOTIDE SEQUENCE [GENOMIC DNA]</scope>
    <source>
        <strain>KIM5 / Biovar Mediaevalis</strain>
    </source>
</reference>
<reference evidence="14" key="3">
    <citation type="journal article" date="2010" name="Int. J. Microbiol.">
        <title>Characterization of pPCP1 plasmids in Yersinia pestis strains isolated from the former Soviet Union.</title>
        <authorList>
            <person name="Rajanna C."/>
            <person name="Revazishvili T."/>
            <person name="Rashid M.H."/>
            <person name="Chubinidze S."/>
            <person name="Bakanidze L."/>
            <person name="Tsanava S."/>
            <person name="Imnadze P."/>
            <person name="Bishop-Lilly K.A."/>
            <person name="Sozhamannan S."/>
            <person name="Gibbons H.S."/>
            <person name="Morris J.G."/>
            <person name="Sulakvelidze A."/>
        </authorList>
    </citation>
    <scope>NUCLEOTIDE SEQUENCE [GENOMIC DNA]</scope>
    <source>
        <strain>C790</strain>
    </source>
</reference>
<reference evidence="16" key="4">
    <citation type="journal article" date="2001" name="Nature">
        <title>Genome sequence of Yersinia pestis, the causative agent of plague.</title>
        <authorList>
            <person name="Parkhill J."/>
            <person name="Wren B.W."/>
            <person name="Thomson N.R."/>
            <person name="Titball R.W."/>
            <person name="Holden M.T.G."/>
            <person name="Prentice M.B."/>
            <person name="Sebaihia M."/>
            <person name="James K.D."/>
            <person name="Churcher C.M."/>
            <person name="Mungall K.L."/>
            <person name="Baker S."/>
            <person name="Basham D."/>
            <person name="Bentley S.D."/>
            <person name="Brooks K."/>
            <person name="Cerdeno-Tarraga A.-M."/>
            <person name="Chillingworth T."/>
            <person name="Cronin A."/>
            <person name="Davies R.M."/>
            <person name="Davis P."/>
            <person name="Dougan G."/>
            <person name="Feltwell T."/>
            <person name="Hamlin N."/>
            <person name="Holroyd S."/>
            <person name="Jagels K."/>
            <person name="Karlyshev A.V."/>
            <person name="Leather S."/>
            <person name="Moule S."/>
            <person name="Oyston P.C.F."/>
            <person name="Quail M.A."/>
            <person name="Rutherford K.M."/>
            <person name="Simmonds M."/>
            <person name="Skelton J."/>
            <person name="Stevens K."/>
            <person name="Whitehead S."/>
            <person name="Barrell B.G."/>
        </authorList>
    </citation>
    <scope>NUCLEOTIDE SEQUENCE [LARGE SCALE GENOMIC DNA]</scope>
    <source>
        <strain>CO-92 / Biovar Orientalis</strain>
    </source>
</reference>
<reference key="5">
    <citation type="submission" date="2018-11" db="EMBL/GenBank/DDBJ databases">
        <title>FDA dAtabase for Regulatory Grade micrObial Sequences (FDA-ARGOS): Supporting development and validation of Infectious Disease Dx tests.</title>
        <authorList>
            <person name="Minogue T."/>
            <person name="Wolcott M."/>
            <person name="Wasieloski L."/>
            <person name="Aguilar W."/>
            <person name="Moore D."/>
            <person name="Jaissle J."/>
            <person name="Tallon L."/>
            <person name="Sadzewicz L."/>
            <person name="Zhao X."/>
            <person name="Vavikolanu K."/>
            <person name="Mehta A."/>
            <person name="Aluvathingal J."/>
            <person name="Nadendla S."/>
            <person name="Yan Y."/>
            <person name="Sichtig H."/>
        </authorList>
    </citation>
    <scope>NUCLEOTIDE SEQUENCE [LARGE SCALE GENOMIC DNA]</scope>
    <source>
        <strain>FDAARGOS_601</strain>
        <plasmid>unnamed1</plasmid>
    </source>
</reference>
<reference key="6">
    <citation type="journal article" date="2005" name="Mol. Microbiol.">
        <title>The Yersinia pestis type III secretion needle plays a role in the regulation of Yop secretion.</title>
        <authorList>
            <person name="Torruellas J."/>
            <person name="Jackson M.W."/>
            <person name="Pennock J.W."/>
            <person name="Plano G.V."/>
        </authorList>
    </citation>
    <scope>FUNCTION</scope>
    <scope>SUBCELLULAR LOCATION</scope>
    <scope>DISRUPTION PHENOTYPE</scope>
    <scope>MUTAGENESIS OF ILE-13; ASP-17; ASP-28; ASN-31; VAL-34; ASP-46; ASP-77 AND ILE-82</scope>
    <source>
        <strain>KIM5-3001</strain>
    </source>
</reference>
<reference key="7">
    <citation type="journal article" date="2005" name="Protein Expr. Purif.">
        <title>Yersinia pestis Yop secretion protein F: purification, characterization, and protective efficacy against bubonic plague.</title>
        <authorList>
            <person name="Swietnicki W."/>
            <person name="Powell B.S."/>
            <person name="Goodin J."/>
        </authorList>
    </citation>
    <scope>IDENTIFICATION BY MASS SPECTROMETRY</scope>
    <scope>SUBUNIT</scope>
    <scope>IDENTIFICATION AS A POTENTIAL VACCINE CANDIDATE</scope>
    <source>
        <strain>CO-92 / Biovar Orientalis</strain>
    </source>
</reference>
<reference key="8">
    <citation type="journal article" date="2010" name="Mol. Microbiol.">
        <title>YopR impacts type III needle polymerization in Yersinia species.</title>
        <authorList>
            <person name="Blaylock B."/>
            <person name="Berube B.J."/>
            <person name="Schneewind O."/>
        </authorList>
    </citation>
    <scope>FUNCTION</scope>
    <scope>ACTIVITY REGULATION</scope>
    <scope>SUBUNIT</scope>
    <source>
        <strain>KIM D27</strain>
    </source>
</reference>
<reference key="9">
    <citation type="journal article" date="2014" name="Infect. Immun.">
        <title>Type III secretion needle proteins induce cell signaling and cytokine secretion via Toll-like receptors.</title>
        <authorList>
            <person name="Jessen D.L."/>
            <person name="Osei-Owusu P."/>
            <person name="Toosky M."/>
            <person name="Roughead W."/>
            <person name="Bradley D.S."/>
            <person name="Nilles M.L."/>
        </authorList>
    </citation>
    <scope>FUNCTION IN INDUCTION OF HOST CELLULAR RESPONSES</scope>
    <source>
        <strain>KIM8</strain>
    </source>
</reference>
<reference key="10">
    <citation type="journal article" date="2015" name="Infect. Immun.">
        <title>The N terminus of type III secretion needle protein YscF from Yersinia pestis functions to modulate innate immune responses.</title>
        <authorList>
            <person name="Osei-Owusu P."/>
            <person name="Jessen Condry D.L."/>
            <person name="Toosky M."/>
            <person name="Roughead W."/>
            <person name="Bradley D.S."/>
            <person name="Nilles M.L."/>
        </authorList>
    </citation>
    <scope>FUNCTION IN INDUCTION OF HOST CELLULAR RESPONSES</scope>
    <scope>ACTIVITY REGULATION</scope>
    <scope>MUTAGENESIS OF 2-SER--ASP-15; 2-SER--ALA-20; LEU-16; ASP-17 AND VAL-19</scope>
    <source>
        <strain>KIM8-3002</strain>
    </source>
</reference>
<reference key="11">
    <citation type="journal article" date="2017" name="J. Biol. Chem.">
        <title>An Interaction between the Inner Rod Protein YscI and the Needle Protein YscF Is Required to Assemble the Needle Structure of the Yersinia Type Three Secretion System.</title>
        <authorList>
            <person name="Cao S.Y."/>
            <person name="Liu W.B."/>
            <person name="Tan Y.F."/>
            <person name="Yang H.Y."/>
            <person name="Zhang T.T."/>
            <person name="Wang T."/>
            <person name="Wang X.Y."/>
            <person name="Song Y.J."/>
            <person name="Yang R.F."/>
            <person name="Du Z.M."/>
        </authorList>
    </citation>
    <scope>FUNCTION</scope>
    <scope>ACTIVITY REGULATION</scope>
    <scope>SUBUNIT</scope>
    <scope>INTERACTION WITH YSCI/SCTI</scope>
    <scope>SUBCELLULAR LOCATION</scope>
    <source>
        <strain>201 / Biovar Microtus</strain>
    </source>
</reference>
<reference key="12">
    <citation type="journal article" date="2018" name="Microbiology">
        <title>The YscE/YscG chaperone and YscF N-terminal sequences target YscF to the Yersinia pestis type III secretion apparatus.</title>
        <authorList>
            <person name="Souza C.A."/>
            <person name="Richards K.L."/>
            <person name="Park Y."/>
            <person name="Schwartz M."/>
            <person name="Torruellas Garcia J."/>
            <person name="Schesser Bartra S."/>
            <person name="Plano G.V."/>
        </authorList>
    </citation>
    <scope>ACTIVITY REGULATION</scope>
    <scope>SUBUNIT</scope>
    <scope>SUBCELLULAR LOCATION</scope>
    <scope>DOMAIN</scope>
    <scope>DISRUPTION PHENOTYPE</scope>
    <scope>MUTAGENESIS OF 1-MET--THR-8; 2-SER--ASP-15; 2-SER--ALA-20 AND 86-PHE-PRO-87</scope>
    <source>
        <strain>KIM5-3001</strain>
    </source>
</reference>
<reference evidence="17" key="13">
    <citation type="journal article" date="2008" name="J. Mol. Biol.">
        <title>Structural characterization of the Yersinia pestis type III secretion system needle protein YscF in complex with its heterodimeric chaperone YscE/YscG.</title>
        <authorList>
            <person name="Sun P."/>
            <person name="Tropea J.E."/>
            <person name="Austin B.P."/>
            <person name="Cherry S."/>
            <person name="Waugh D.S."/>
        </authorList>
    </citation>
    <scope>X-RAY CRYSTALLOGRAPHY (1.80 ANGSTROMS) OF 2-87 IN COMPLEX WITH YSCE AND YSCG</scope>
    <scope>ACTIVITY REGULATION</scope>
    <scope>SUBUNIT</scope>
</reference>
<name>SCTF_YERPE</name>
<keyword id="KW-0002">3D-structure</keyword>
<keyword id="KW-0614">Plasmid</keyword>
<keyword id="KW-0653">Protein transport</keyword>
<keyword id="KW-1185">Reference proteome</keyword>
<keyword id="KW-0964">Secreted</keyword>
<keyword id="KW-0813">Transport</keyword>
<keyword id="KW-0843">Virulence</keyword>
<protein>
    <recommendedName>
        <fullName evidence="11">Type 3 secretion system needle filament protein</fullName>
        <shortName evidence="11">T3SS needle filament protein</shortName>
    </recommendedName>
    <alternativeName>
        <fullName evidence="11">Yop proteins translocation protein F</fullName>
    </alternativeName>
    <alternativeName>
        <fullName evidence="10">Yop secretion protein F</fullName>
    </alternativeName>
</protein>
<accession>O68691</accession>
<accession>A0A0H2W1H9</accession>
<accession>A0A2U2GUP2</accession>
<accession>A0A384L5Y9</accession>
<accession>A0A5P8YM21</accession>
<accession>Q74YY1</accession>
<accession>Q7ARI0</accession>
<organism>
    <name type="scientific">Yersinia pestis</name>
    <dbReference type="NCBI Taxonomy" id="632"/>
    <lineage>
        <taxon>Bacteria</taxon>
        <taxon>Pseudomonadati</taxon>
        <taxon>Pseudomonadota</taxon>
        <taxon>Gammaproteobacteria</taxon>
        <taxon>Enterobacterales</taxon>
        <taxon>Yersiniaceae</taxon>
        <taxon>Yersinia</taxon>
    </lineage>
</organism>
<comment type="function">
    <text evidence="3 5 8">Component of the type III secretion system (T3SS), also called injectisome, which is used to inject bacterial effector proteins into eukaryotic host cells (PubMed:16135236). YscF/SctF forms the external needle filament that protrudes from the bacterial surface (PubMed:16135236, PubMed:19968786, PubMed:28196868). Essential for the calcium-dependent regulation of T3SS and Yop secretion (PubMed:16135236). Required to block Yop secretion in the presence of extracellular calcium (PubMed:16135236). May be the extracellular T3SS component that senses extracellular calcium and/or participates in transmitting the calcium signal to the cytoplasmic compartment where the block in secretion is initiated (PubMed:16135236).</text>
</comment>
<comment type="function">
    <text evidence="6 7">During infection, can induce innate immune responses (PubMed:24643544, PubMed:25644012). The needle proteins interact with host TLR2 or TLR4, and induce signaling by NF-kappa-B and/or AP-1 (PubMed:24643544, PubMed:25644012). This activation is MyD88 dependent and results in increased expression of cytokines, including TNF-alpha, IL-6 and IL-8 (PubMed:24643544, PubMed:25644012). Innate immune responses are modulated by the N-terminal region of YscF/SctF (PubMed:25644012).</text>
</comment>
<comment type="activity regulation">
    <text evidence="4 5 7 8 9">The secretion and/or polymerization may be controlled by the type III secretion system regulator YopR (PubMed:19968786). Interaction with YscE-YscG chaperone prevents premature polymerization of YscF/SctF in the bacterial cytosol and is required for its stability and efficient secretion (PubMed:18281060, PubMed:29458689). Interaction with the needle adapter protein YscI/SctI is required for YscF/SctF secretion, needle assembly and Yop secretion (PubMed:28196868). The N-terminus varies among bacterial species, not only in amino acid composition but also in the number of amino acids, and may function in manipulating the host response to the advantage of the bacteria (PubMed:25644012). In Y.pestis, the N-terminus can function to decrease cytokine induction, perhaps contributing to a favorable immune environment leading to survival of Y.pestis within the eukaryotic host (PubMed:25644012).</text>
</comment>
<comment type="subunit">
    <text evidence="1 2 4 5 8 9">The core secretion machinery of the T3SS is composed of approximately 20 different proteins, including cytoplasmic components, a base, an export apparatus and a needle (By similarity). This subunit polymerizes and forms the helical needle filament (PubMed:19968786, PubMed:28196868). Forms high-order oligomers in vitro (PubMed:15939303). Forms a stable ternary complex with the YscE-YscG chaperone (PubMed:18281060, PubMed:29458689). Interacts directly with YscG but makes very little direct contact with YscE (PubMed:18281060). Interacts with the needle adapter protein YscI/SctI (PubMed:28196868).</text>
</comment>
<comment type="subcellular location">
    <subcellularLocation>
        <location evidence="3 8 9">Secreted</location>
    </subcellularLocation>
    <subcellularLocation>
        <location evidence="3 9">Cell surface</location>
    </subcellularLocation>
    <text evidence="9">Targeted to the T3SS apparatus via the combined action of an N-terminal secretion signal and the YscE-YscG chaperone.</text>
</comment>
<comment type="domain">
    <text evidence="9">Contains an N-terminal secretion signal that is required for secretion.</text>
</comment>
<comment type="disruption phenotype">
    <text evidence="3 9">Deletion mutant shows no secretion of Yops in the presence or absence of calcium (PubMed:16135236). Deletion mutant has no detectable level of YopN secretion, YscF expression or YscEFG assembly, but it expresses normal levels of another Ysc component, YscJ/SctJ (PubMed:29458689).</text>
</comment>
<comment type="miscellaneous">
    <text evidence="2">The YscF/SctF protein can provide a protective immune response against lethal plague challenge during subcutaneous plague infection.</text>
</comment>
<comment type="similarity">
    <text evidence="11">Belongs to the SctF family.</text>
</comment>
<sequence>MSNFSGFTKGTDIADLDAVAQTLKKPADDANKAVNDSIAALKDKPDNPALLADLQHSINKWSVIYNINSTIVRSMKDLMQGILQKFP</sequence>
<geneLocation type="plasmid">
    <name>pCD1</name>
</geneLocation>
<geneLocation type="plasmid">
    <name>unnamed1</name>
</geneLocation>
<dbReference type="EMBL" id="AF074612">
    <property type="protein sequence ID" value="AAC69778.1"/>
    <property type="molecule type" value="Genomic_DNA"/>
</dbReference>
<dbReference type="EMBL" id="AF053946">
    <property type="protein sequence ID" value="AAC62549.1"/>
    <property type="molecule type" value="Genomic_DNA"/>
</dbReference>
<dbReference type="EMBL" id="HQ612242">
    <property type="protein sequence ID" value="ADV16642.1"/>
    <property type="molecule type" value="Genomic_DNA"/>
</dbReference>
<dbReference type="EMBL" id="AL117189">
    <property type="protein sequence ID" value="CAB54932.1"/>
    <property type="molecule type" value="Genomic_DNA"/>
</dbReference>
<dbReference type="EMBL" id="CP033697">
    <property type="protein sequence ID" value="AYX17967.1"/>
    <property type="molecule type" value="Genomic_DNA"/>
</dbReference>
<dbReference type="PIR" id="T43570">
    <property type="entry name" value="T43570"/>
</dbReference>
<dbReference type="RefSeq" id="NP_395189.1">
    <property type="nucleotide sequence ID" value="NC_003131.1"/>
</dbReference>
<dbReference type="RefSeq" id="NP_857727.1">
    <property type="nucleotide sequence ID" value="NC_004836.1"/>
</dbReference>
<dbReference type="RefSeq" id="NP_857922.1">
    <property type="nucleotide sequence ID" value="NC_004839.1"/>
</dbReference>
<dbReference type="RefSeq" id="WP_002212916.1">
    <property type="nucleotide sequence ID" value="NZ_WUCM01000070.1"/>
</dbReference>
<dbReference type="PDB" id="2P58">
    <property type="method" value="X-ray"/>
    <property type="resolution" value="1.80 A"/>
    <property type="chains" value="B=2-87"/>
</dbReference>
<dbReference type="PDBsum" id="2P58"/>
<dbReference type="SMR" id="O68691"/>
<dbReference type="PaxDb" id="214092-5832475"/>
<dbReference type="ABCD" id="O68691">
    <property type="antibodies" value="7 sequenced antibodies"/>
</dbReference>
<dbReference type="DNASU" id="1149286"/>
<dbReference type="KEGG" id="ype:YPCD1.55"/>
<dbReference type="PATRIC" id="fig|1028802.3.peg.1299"/>
<dbReference type="eggNOG" id="ENOG5032Z0P">
    <property type="taxonomic scope" value="Bacteria"/>
</dbReference>
<dbReference type="HOGENOM" id="CLU_187681_0_0_6"/>
<dbReference type="OMA" id="HAINKWS"/>
<dbReference type="OrthoDB" id="5893422at2"/>
<dbReference type="EvolutionaryTrace" id="O68691"/>
<dbReference type="Proteomes" id="UP000000815">
    <property type="component" value="Plasmid pCD1"/>
</dbReference>
<dbReference type="GO" id="GO:0009986">
    <property type="term" value="C:cell surface"/>
    <property type="evidence" value="ECO:0007669"/>
    <property type="project" value="UniProtKB-SubCell"/>
</dbReference>
<dbReference type="GO" id="GO:0005576">
    <property type="term" value="C:extracellular region"/>
    <property type="evidence" value="ECO:0007669"/>
    <property type="project" value="UniProtKB-SubCell"/>
</dbReference>
<dbReference type="GO" id="GO:0030257">
    <property type="term" value="C:type III protein secretion system complex"/>
    <property type="evidence" value="ECO:0007669"/>
    <property type="project" value="InterPro"/>
</dbReference>
<dbReference type="GO" id="GO:0030254">
    <property type="term" value="P:protein secretion by the type III secretion system"/>
    <property type="evidence" value="ECO:0007669"/>
    <property type="project" value="InterPro"/>
</dbReference>
<dbReference type="FunFam" id="1.20.58.90:FF:000014">
    <property type="entry name" value="Type III secretion apparatus needle protein YscF"/>
    <property type="match status" value="1"/>
</dbReference>
<dbReference type="Gene3D" id="1.20.58.90">
    <property type="match status" value="1"/>
</dbReference>
<dbReference type="InterPro" id="IPR021123">
    <property type="entry name" value="T3SS_needle-like"/>
</dbReference>
<dbReference type="InterPro" id="IPR037203">
    <property type="entry name" value="T3SS_needle-like_sf"/>
</dbReference>
<dbReference type="InterPro" id="IPR011841">
    <property type="entry name" value="T3SS_needle_YscF"/>
</dbReference>
<dbReference type="NCBIfam" id="TIGR02105">
    <property type="entry name" value="III_needle"/>
    <property type="match status" value="1"/>
</dbReference>
<dbReference type="Pfam" id="PF09392">
    <property type="entry name" value="T3SS_needle_F"/>
    <property type="match status" value="1"/>
</dbReference>
<dbReference type="SUPFAM" id="SSF140129">
    <property type="entry name" value="MxiH-like"/>
    <property type="match status" value="1"/>
</dbReference>
<gene>
    <name evidence="1" type="primary">sctF</name>
    <name evidence="12" type="synonym">yscF</name>
    <name evidence="16" type="ordered locus">YPCD1.55</name>
    <name evidence="13" type="ordered locus">Y0026</name>
    <name evidence="15" type="ORF">EGX46_00095</name>
</gene>
<proteinExistence type="evidence at protein level"/>
<feature type="chain" id="PRO_0000458644" description="Type 3 secretion system needle filament protein">
    <location>
        <begin position="1"/>
        <end position="87"/>
    </location>
</feature>
<feature type="mutagenesis site" description="Cannot secrete YscF/SctF or YopM." evidence="9">
    <original>MSNFSGFT</original>
    <variation>MSIIIIII</variation>
    <location>
        <begin position="1"/>
        <end position="8"/>
    </location>
</feature>
<feature type="mutagenesis site" description="Does not affect secretion, T3SS activity and YopM secretion, but secretion is no longer regulated by calcium." evidence="9">
    <original>MSNFSGFT</original>
    <variation>MSISSISI</variation>
    <variation>MSSIISSI</variation>
    <location>
        <begin position="1"/>
        <end position="8"/>
    </location>
</feature>
<feature type="mutagenesis site" description="Cannot secrete YscF/SctF or YopM." evidence="9">
    <original>MSNFSGFT</original>
    <variation>MSSSSSSS</variation>
    <location>
        <begin position="1"/>
        <end position="8"/>
    </location>
</feature>
<feature type="mutagenesis site" description="Forms functional needles. However, another study shows lack of T3SS activity for this mutant." evidence="7 9">
    <location>
        <begin position="2"/>
        <end position="20"/>
    </location>
</feature>
<feature type="mutagenesis site" description="Does not alter secretion or function in the T3SS process, but shows a complete defect in the calcium-dependent regulation of T3SS. Induces significantly higher cytokines levels (TNF-alpha, IL-6 and IL-8) and NF-kappa-B/AP-1 activation in host." evidence="7 9">
    <location>
        <begin position="2"/>
        <end position="15"/>
    </location>
</feature>
<feature type="mutagenesis site" description="Requires increased levels of calcium to block Yop secretion. Can assemble needle polymers on its surface." evidence="3">
    <original>I</original>
    <variation>A</variation>
    <location>
        <position position="13"/>
    </location>
</feature>
<feature type="mutagenesis site" description="Exhibits constitutive Yop secretion in the presence or absence of calcium." evidence="3">
    <original>I</original>
    <variation>C</variation>
    <location>
        <position position="13"/>
    </location>
</feature>
<feature type="mutagenesis site" description="Shows drastically reduced NF-kappa-B/AP-1 activation." evidence="7">
    <original>L</original>
    <variation>A</variation>
    <location>
        <position position="16"/>
    </location>
</feature>
<feature type="mutagenesis site" description="Exhibits constitutive Yop secretion in the presence or absence of calcium. No change in NF-kappa-B/AP-1 activation." evidence="3 7">
    <original>D</original>
    <variation>A</variation>
    <location>
        <position position="17"/>
    </location>
</feature>
<feature type="mutagenesis site" description="Shows no Yop secretion in the presence or absence of calcium." evidence="3">
    <original>D</original>
    <variation>C</variation>
    <location>
        <position position="17"/>
    </location>
</feature>
<feature type="mutagenesis site" description="Shows drastically reduced NF-kappa-B/AP-1 activation." evidence="7">
    <original>V</original>
    <variation>A</variation>
    <location>
        <position position="19"/>
    </location>
</feature>
<feature type="mutagenesis site" description="Exhibits constitutive Yop secretion in the presence or absence of calcium. Requires high levels of calcium to block Yop secretion. Can assemble needle polymers on its surface." evidence="3">
    <original>D</original>
    <variation>A</variation>
    <location>
        <position position="28"/>
    </location>
</feature>
<feature type="mutagenesis site" description="Exhibits constitutive Yop secretion in the presence or absence of calcium." evidence="3">
    <original>D</original>
    <variation>C</variation>
    <location>
        <position position="28"/>
    </location>
</feature>
<feature type="mutagenesis site" description="Shows no Yop secretion in the presence or absence of calcium." evidence="3">
    <original>N</original>
    <variation>A</variation>
    <location>
        <position position="31"/>
    </location>
</feature>
<feature type="mutagenesis site" description="Shows no Yop secretion in the presence or absence of calcium." evidence="3">
    <original>V</original>
    <variation>A</variation>
    <location>
        <position position="34"/>
    </location>
</feature>
<feature type="mutagenesis site" description="Exhibits constitutive Yop secretion in the presence or absence of calcium. Requires high levels of calcium to block Yop secretion. Can assemble needle polymers on its surface." evidence="3">
    <original>D</original>
    <variation>A</variation>
    <location>
        <position position="46"/>
    </location>
</feature>
<feature type="mutagenesis site" description="Exhibits constitutive Yop secretion in the presence or absence of calcium." evidence="3">
    <original>D</original>
    <variation>C</variation>
    <location>
        <position position="46"/>
    </location>
</feature>
<feature type="mutagenesis site" description="Shows no Yop secretion in the presence or absence of calcium." evidence="3">
    <original>D</original>
    <variation>A</variation>
    <variation>C</variation>
    <location>
        <position position="77"/>
    </location>
</feature>
<feature type="mutagenesis site" description="Shows no Yop secretion in the presence or absence of calcium." evidence="3">
    <original>I</original>
    <variation>A</variation>
    <variation>C</variation>
    <location>
        <position position="82"/>
    </location>
</feature>
<feature type="mutagenesis site" description="Reduced YscF production and lack of T3SS activity." evidence="9">
    <location>
        <begin position="86"/>
        <end position="87"/>
    </location>
</feature>
<feature type="helix" evidence="18">
    <location>
        <begin position="52"/>
        <end position="58"/>
    </location>
</feature>
<feature type="helix" evidence="18">
    <location>
        <begin position="61"/>
        <end position="65"/>
    </location>
</feature>
<feature type="helix" evidence="18">
    <location>
        <begin position="69"/>
        <end position="84"/>
    </location>
</feature>
<evidence type="ECO:0000250" key="1">
    <source>
        <dbReference type="UniProtKB" id="Q01247"/>
    </source>
</evidence>
<evidence type="ECO:0000269" key="2">
    <source>
    </source>
</evidence>
<evidence type="ECO:0000269" key="3">
    <source>
    </source>
</evidence>
<evidence type="ECO:0000269" key="4">
    <source>
    </source>
</evidence>
<evidence type="ECO:0000269" key="5">
    <source>
    </source>
</evidence>
<evidence type="ECO:0000269" key="6">
    <source>
    </source>
</evidence>
<evidence type="ECO:0000269" key="7">
    <source>
    </source>
</evidence>
<evidence type="ECO:0000269" key="8">
    <source>
    </source>
</evidence>
<evidence type="ECO:0000269" key="9">
    <source>
    </source>
</evidence>
<evidence type="ECO:0000303" key="10">
    <source>
    </source>
</evidence>
<evidence type="ECO:0000305" key="11"/>
<evidence type="ECO:0000312" key="12">
    <source>
        <dbReference type="EMBL" id="AAC62549.1"/>
    </source>
</evidence>
<evidence type="ECO:0000312" key="13">
    <source>
        <dbReference type="EMBL" id="AAC69778.1"/>
    </source>
</evidence>
<evidence type="ECO:0000312" key="14">
    <source>
        <dbReference type="EMBL" id="ADV16642.1"/>
    </source>
</evidence>
<evidence type="ECO:0000312" key="15">
    <source>
        <dbReference type="EMBL" id="AYX17967.1"/>
    </source>
</evidence>
<evidence type="ECO:0000312" key="16">
    <source>
        <dbReference type="EMBL" id="CAB54932.1"/>
    </source>
</evidence>
<evidence type="ECO:0007744" key="17">
    <source>
        <dbReference type="PDB" id="2P58"/>
    </source>
</evidence>
<evidence type="ECO:0007829" key="18">
    <source>
        <dbReference type="PDB" id="2P58"/>
    </source>
</evidence>